<proteinExistence type="inferred from homology"/>
<evidence type="ECO:0000250" key="1"/>
<evidence type="ECO:0000255" key="2">
    <source>
        <dbReference type="HAMAP-Rule" id="MF_01344"/>
    </source>
</evidence>
<geneLocation type="chloroplast"/>
<gene>
    <name evidence="2" type="primary">petD</name>
</gene>
<feature type="chain" id="PRO_0000255570" description="Cytochrome b6-f complex subunit 4">
    <location>
        <begin position="1"/>
        <end position="160"/>
    </location>
</feature>
<feature type="transmembrane region" description="Helical" evidence="2">
    <location>
        <begin position="36"/>
        <end position="56"/>
    </location>
</feature>
<feature type="transmembrane region" description="Helical" evidence="2">
    <location>
        <begin position="95"/>
        <end position="115"/>
    </location>
</feature>
<feature type="transmembrane region" description="Helical" evidence="2">
    <location>
        <begin position="131"/>
        <end position="151"/>
    </location>
</feature>
<protein>
    <recommendedName>
        <fullName evidence="2">Cytochrome b6-f complex subunit 4</fullName>
    </recommendedName>
    <alternativeName>
        <fullName evidence="2">17 kDa polypeptide</fullName>
    </alternativeName>
</protein>
<sequence>MSILKKPDLTDPKLRAKLAKGMGHNYYGEPAWPNDLLYVFPVVIIGTFACSIGLAILEPSSIGEKSNPFATPLEILPEWYFFPTFNLLRVIPNKLLGVLSMAAVPAGLLTVPFIENVNKFQNPFRRPIATTVFLIGTVVSIWLGIGATMPINNAITLGLF</sequence>
<dbReference type="EMBL" id="AP006715">
    <property type="protein sequence ID" value="BAE92464.1"/>
    <property type="molecule type" value="Genomic_DNA"/>
</dbReference>
<dbReference type="RefSeq" id="YP_537021.1">
    <property type="nucleotide sequence ID" value="NC_007932.1"/>
</dbReference>
<dbReference type="SMR" id="Q1XDE7"/>
<dbReference type="GeneID" id="3978940"/>
<dbReference type="GO" id="GO:0009535">
    <property type="term" value="C:chloroplast thylakoid membrane"/>
    <property type="evidence" value="ECO:0007669"/>
    <property type="project" value="UniProtKB-SubCell"/>
</dbReference>
<dbReference type="GO" id="GO:0005739">
    <property type="term" value="C:mitochondrion"/>
    <property type="evidence" value="ECO:0007669"/>
    <property type="project" value="GOC"/>
</dbReference>
<dbReference type="GO" id="GO:0045158">
    <property type="term" value="F:electron transporter, transferring electrons within cytochrome b6/f complex of photosystem II activity"/>
    <property type="evidence" value="ECO:0007669"/>
    <property type="project" value="UniProtKB-UniRule"/>
</dbReference>
<dbReference type="GO" id="GO:0045156">
    <property type="term" value="F:electron transporter, transferring electrons within the cyclic electron transport pathway of photosynthesis activity"/>
    <property type="evidence" value="ECO:0007669"/>
    <property type="project" value="InterPro"/>
</dbReference>
<dbReference type="GO" id="GO:0008121">
    <property type="term" value="F:ubiquinol-cytochrome-c reductase activity"/>
    <property type="evidence" value="ECO:0007669"/>
    <property type="project" value="TreeGrafter"/>
</dbReference>
<dbReference type="GO" id="GO:0006122">
    <property type="term" value="P:mitochondrial electron transport, ubiquinol to cytochrome c"/>
    <property type="evidence" value="ECO:0007669"/>
    <property type="project" value="TreeGrafter"/>
</dbReference>
<dbReference type="GO" id="GO:0009767">
    <property type="term" value="P:photosynthetic electron transport chain"/>
    <property type="evidence" value="ECO:0007669"/>
    <property type="project" value="InterPro"/>
</dbReference>
<dbReference type="CDD" id="cd00290">
    <property type="entry name" value="cytochrome_b_C"/>
    <property type="match status" value="1"/>
</dbReference>
<dbReference type="FunFam" id="1.10.287.980:FF:000001">
    <property type="entry name" value="Cytochrome b6-f complex subunit 4"/>
    <property type="match status" value="1"/>
</dbReference>
<dbReference type="FunFam" id="1.20.5.510:FF:000002">
    <property type="entry name" value="Cytochrome b6-f complex subunit 4"/>
    <property type="match status" value="1"/>
</dbReference>
<dbReference type="Gene3D" id="1.10.287.980">
    <property type="entry name" value="plastocyanin oxidoreductase"/>
    <property type="match status" value="1"/>
</dbReference>
<dbReference type="Gene3D" id="1.20.5.510">
    <property type="entry name" value="Single helix bin"/>
    <property type="match status" value="1"/>
</dbReference>
<dbReference type="HAMAP" id="MF_01344">
    <property type="entry name" value="Cytb6_f_subIV"/>
    <property type="match status" value="1"/>
</dbReference>
<dbReference type="InterPro" id="IPR005798">
    <property type="entry name" value="Cyt_b/b6_C"/>
</dbReference>
<dbReference type="InterPro" id="IPR036150">
    <property type="entry name" value="Cyt_b/b6_C_sf"/>
</dbReference>
<dbReference type="InterPro" id="IPR005870">
    <property type="entry name" value="Cyt_b6/f_cplx_suIV"/>
</dbReference>
<dbReference type="InterPro" id="IPR048260">
    <property type="entry name" value="Cytochrome_b_C_euk/bac"/>
</dbReference>
<dbReference type="NCBIfam" id="TIGR01156">
    <property type="entry name" value="cytb6_f_IV"/>
    <property type="match status" value="1"/>
</dbReference>
<dbReference type="PANTHER" id="PTHR19271">
    <property type="entry name" value="CYTOCHROME B"/>
    <property type="match status" value="1"/>
</dbReference>
<dbReference type="PANTHER" id="PTHR19271:SF41">
    <property type="entry name" value="CYTOCHROME B_B6 C-TERMINAL REGION PROFILE DOMAIN-CONTAINING PROTEIN"/>
    <property type="match status" value="1"/>
</dbReference>
<dbReference type="Pfam" id="PF00032">
    <property type="entry name" value="Cytochrom_B_C"/>
    <property type="match status" value="1"/>
</dbReference>
<dbReference type="PIRSF" id="PIRSF000033">
    <property type="entry name" value="B6f_17K"/>
    <property type="match status" value="1"/>
</dbReference>
<dbReference type="SUPFAM" id="SSF81648">
    <property type="entry name" value="a domain/subunit of cytochrome bc1 complex (Ubiquinol-cytochrome c reductase)"/>
    <property type="match status" value="1"/>
</dbReference>
<dbReference type="PROSITE" id="PS51003">
    <property type="entry name" value="CYTB_CTER"/>
    <property type="match status" value="1"/>
</dbReference>
<organism>
    <name type="scientific">Pyropia yezoensis</name>
    <name type="common">Susabi-nori</name>
    <name type="synonym">Porphyra yezoensis</name>
    <dbReference type="NCBI Taxonomy" id="2788"/>
    <lineage>
        <taxon>Eukaryota</taxon>
        <taxon>Rhodophyta</taxon>
        <taxon>Bangiophyceae</taxon>
        <taxon>Bangiales</taxon>
        <taxon>Bangiaceae</taxon>
        <taxon>Pyropia</taxon>
    </lineage>
</organism>
<keyword id="KW-0150">Chloroplast</keyword>
<keyword id="KW-0249">Electron transport</keyword>
<keyword id="KW-0472">Membrane</keyword>
<keyword id="KW-0602">Photosynthesis</keyword>
<keyword id="KW-0934">Plastid</keyword>
<keyword id="KW-0793">Thylakoid</keyword>
<keyword id="KW-0812">Transmembrane</keyword>
<keyword id="KW-1133">Transmembrane helix</keyword>
<keyword id="KW-0813">Transport</keyword>
<reference key="1">
    <citation type="submission" date="2003-11" db="EMBL/GenBank/DDBJ databases">
        <title>Whole genome sequence of Porphyra yezoensis chloroplast.</title>
        <authorList>
            <person name="Kunimoto M."/>
            <person name="Morishima K."/>
            <person name="Yoshikawa M."/>
            <person name="Fukuda S."/>
            <person name="Kobayashi T."/>
            <person name="Kobayashi M."/>
            <person name="Okazaki T."/>
            <person name="Ohara I."/>
            <person name="Nakayama I."/>
        </authorList>
    </citation>
    <scope>NUCLEOTIDE SEQUENCE [LARGE SCALE GENOMIC DNA]</scope>
    <source>
        <strain>U-51</strain>
    </source>
</reference>
<accession>Q1XDE7</accession>
<name>PETD_PYRYE</name>
<comment type="function">
    <text evidence="2">Component of the cytochrome b6-f complex, which mediates electron transfer between photosystem II (PSII) and photosystem I (PSI), cyclic electron flow around PSI, and state transitions.</text>
</comment>
<comment type="subunit">
    <text evidence="1">The 4 large subunits of the cytochrome b6-f complex are cytochrome b6, subunit IV (17 kDa polypeptide, petD), cytochrome f and the Rieske protein, while the 4 small subunits are petG, petL, petM and petN. The complex functions as a dimer (By similarity).</text>
</comment>
<comment type="subcellular location">
    <subcellularLocation>
        <location evidence="2">Plastid</location>
        <location evidence="2">Chloroplast thylakoid membrane</location>
        <topology evidence="2">Multi-pass membrane protein</topology>
    </subcellularLocation>
</comment>
<comment type="similarity">
    <text evidence="2">Belongs to the cytochrome b family. PetD subfamily.</text>
</comment>